<gene>
    <name evidence="1" type="primary">rpsN</name>
    <name type="ordered locus">BamMC406_0289</name>
</gene>
<organism>
    <name type="scientific">Burkholderia ambifaria (strain MC40-6)</name>
    <dbReference type="NCBI Taxonomy" id="398577"/>
    <lineage>
        <taxon>Bacteria</taxon>
        <taxon>Pseudomonadati</taxon>
        <taxon>Pseudomonadota</taxon>
        <taxon>Betaproteobacteria</taxon>
        <taxon>Burkholderiales</taxon>
        <taxon>Burkholderiaceae</taxon>
        <taxon>Burkholderia</taxon>
        <taxon>Burkholderia cepacia complex</taxon>
    </lineage>
</organism>
<comment type="function">
    <text evidence="1">Binds 16S rRNA, required for the assembly of 30S particles and may also be responsible for determining the conformation of the 16S rRNA at the A site.</text>
</comment>
<comment type="subunit">
    <text evidence="1">Part of the 30S ribosomal subunit. Contacts proteins S3 and S10.</text>
</comment>
<comment type="similarity">
    <text evidence="1">Belongs to the universal ribosomal protein uS14 family.</text>
</comment>
<keyword id="KW-0687">Ribonucleoprotein</keyword>
<keyword id="KW-0689">Ribosomal protein</keyword>
<keyword id="KW-0694">RNA-binding</keyword>
<keyword id="KW-0699">rRNA-binding</keyword>
<protein>
    <recommendedName>
        <fullName evidence="1">Small ribosomal subunit protein uS14</fullName>
    </recommendedName>
    <alternativeName>
        <fullName evidence="2">30S ribosomal protein S14</fullName>
    </alternativeName>
</protein>
<evidence type="ECO:0000255" key="1">
    <source>
        <dbReference type="HAMAP-Rule" id="MF_00537"/>
    </source>
</evidence>
<evidence type="ECO:0000305" key="2"/>
<dbReference type="EMBL" id="CP001025">
    <property type="protein sequence ID" value="ACB62790.1"/>
    <property type="molecule type" value="Genomic_DNA"/>
</dbReference>
<dbReference type="RefSeq" id="WP_006482884.1">
    <property type="nucleotide sequence ID" value="NC_010551.1"/>
</dbReference>
<dbReference type="SMR" id="B1YRP2"/>
<dbReference type="GeneID" id="98107147"/>
<dbReference type="KEGG" id="bac:BamMC406_0289"/>
<dbReference type="HOGENOM" id="CLU_139869_0_1_4"/>
<dbReference type="OrthoDB" id="9810484at2"/>
<dbReference type="Proteomes" id="UP000001680">
    <property type="component" value="Chromosome 1"/>
</dbReference>
<dbReference type="GO" id="GO:0005737">
    <property type="term" value="C:cytoplasm"/>
    <property type="evidence" value="ECO:0007669"/>
    <property type="project" value="UniProtKB-ARBA"/>
</dbReference>
<dbReference type="GO" id="GO:0015935">
    <property type="term" value="C:small ribosomal subunit"/>
    <property type="evidence" value="ECO:0007669"/>
    <property type="project" value="TreeGrafter"/>
</dbReference>
<dbReference type="GO" id="GO:0019843">
    <property type="term" value="F:rRNA binding"/>
    <property type="evidence" value="ECO:0007669"/>
    <property type="project" value="UniProtKB-UniRule"/>
</dbReference>
<dbReference type="GO" id="GO:0003735">
    <property type="term" value="F:structural constituent of ribosome"/>
    <property type="evidence" value="ECO:0007669"/>
    <property type="project" value="InterPro"/>
</dbReference>
<dbReference type="GO" id="GO:0006412">
    <property type="term" value="P:translation"/>
    <property type="evidence" value="ECO:0007669"/>
    <property type="project" value="UniProtKB-UniRule"/>
</dbReference>
<dbReference type="FunFam" id="1.10.287.1480:FF:000001">
    <property type="entry name" value="30S ribosomal protein S14"/>
    <property type="match status" value="1"/>
</dbReference>
<dbReference type="Gene3D" id="1.10.287.1480">
    <property type="match status" value="1"/>
</dbReference>
<dbReference type="HAMAP" id="MF_00537">
    <property type="entry name" value="Ribosomal_uS14_1"/>
    <property type="match status" value="1"/>
</dbReference>
<dbReference type="InterPro" id="IPR001209">
    <property type="entry name" value="Ribosomal_uS14"/>
</dbReference>
<dbReference type="InterPro" id="IPR023036">
    <property type="entry name" value="Ribosomal_uS14_bac/plastid"/>
</dbReference>
<dbReference type="NCBIfam" id="NF006477">
    <property type="entry name" value="PRK08881.1"/>
    <property type="match status" value="1"/>
</dbReference>
<dbReference type="PANTHER" id="PTHR19836">
    <property type="entry name" value="30S RIBOSOMAL PROTEIN S14"/>
    <property type="match status" value="1"/>
</dbReference>
<dbReference type="PANTHER" id="PTHR19836:SF19">
    <property type="entry name" value="SMALL RIBOSOMAL SUBUNIT PROTEIN US14M"/>
    <property type="match status" value="1"/>
</dbReference>
<dbReference type="Pfam" id="PF00253">
    <property type="entry name" value="Ribosomal_S14"/>
    <property type="match status" value="1"/>
</dbReference>
<dbReference type="SUPFAM" id="SSF57716">
    <property type="entry name" value="Glucocorticoid receptor-like (DNA-binding domain)"/>
    <property type="match status" value="1"/>
</dbReference>
<name>RS14_BURA4</name>
<proteinExistence type="inferred from homology"/>
<feature type="chain" id="PRO_1000128326" description="Small ribosomal subunit protein uS14">
    <location>
        <begin position="1"/>
        <end position="101"/>
    </location>
</feature>
<reference key="1">
    <citation type="submission" date="2008-04" db="EMBL/GenBank/DDBJ databases">
        <title>Complete sequence of chromosome 1 of Burkholderia ambifaria MC40-6.</title>
        <authorList>
            <person name="Copeland A."/>
            <person name="Lucas S."/>
            <person name="Lapidus A."/>
            <person name="Glavina del Rio T."/>
            <person name="Dalin E."/>
            <person name="Tice H."/>
            <person name="Pitluck S."/>
            <person name="Chain P."/>
            <person name="Malfatti S."/>
            <person name="Shin M."/>
            <person name="Vergez L."/>
            <person name="Lang D."/>
            <person name="Schmutz J."/>
            <person name="Larimer F."/>
            <person name="Land M."/>
            <person name="Hauser L."/>
            <person name="Kyrpides N."/>
            <person name="Lykidis A."/>
            <person name="Ramette A."/>
            <person name="Konstantinidis K."/>
            <person name="Tiedje J."/>
            <person name="Richardson P."/>
        </authorList>
    </citation>
    <scope>NUCLEOTIDE SEQUENCE [LARGE SCALE GENOMIC DNA]</scope>
    <source>
        <strain>MC40-6</strain>
    </source>
</reference>
<sequence>MAKLALIEREKKRARLVAKFAAKREALKAIVEDQSKSEEERYEARLELQQLPRNANPTRQRNRCAITGRPRGTFRKFGLARNKIREIAFRGEIPGLTKASW</sequence>
<accession>B1YRP2</accession>